<reference key="1">
    <citation type="journal article" date="1999" name="Nature">
        <title>Sequence and analysis of chromosome 2 of the plant Arabidopsis thaliana.</title>
        <authorList>
            <person name="Lin X."/>
            <person name="Kaul S."/>
            <person name="Rounsley S.D."/>
            <person name="Shea T.P."/>
            <person name="Benito M.-I."/>
            <person name="Town C.D."/>
            <person name="Fujii C.Y."/>
            <person name="Mason T.M."/>
            <person name="Bowman C.L."/>
            <person name="Barnstead M.E."/>
            <person name="Feldblyum T.V."/>
            <person name="Buell C.R."/>
            <person name="Ketchum K.A."/>
            <person name="Lee J.J."/>
            <person name="Ronning C.M."/>
            <person name="Koo H.L."/>
            <person name="Moffat K.S."/>
            <person name="Cronin L.A."/>
            <person name="Shen M."/>
            <person name="Pai G."/>
            <person name="Van Aken S."/>
            <person name="Umayam L."/>
            <person name="Tallon L.J."/>
            <person name="Gill J.E."/>
            <person name="Adams M.D."/>
            <person name="Carrera A.J."/>
            <person name="Creasy T.H."/>
            <person name="Goodman H.M."/>
            <person name="Somerville C.R."/>
            <person name="Copenhaver G.P."/>
            <person name="Preuss D."/>
            <person name="Nierman W.C."/>
            <person name="White O."/>
            <person name="Eisen J.A."/>
            <person name="Salzberg S.L."/>
            <person name="Fraser C.M."/>
            <person name="Venter J.C."/>
        </authorList>
    </citation>
    <scope>NUCLEOTIDE SEQUENCE [LARGE SCALE GENOMIC DNA]</scope>
    <source>
        <strain>cv. Columbia</strain>
    </source>
</reference>
<reference key="2">
    <citation type="journal article" date="2017" name="Plant J.">
        <title>Araport11: a complete reannotation of the Arabidopsis thaliana reference genome.</title>
        <authorList>
            <person name="Cheng C.Y."/>
            <person name="Krishnakumar V."/>
            <person name="Chan A.P."/>
            <person name="Thibaud-Nissen F."/>
            <person name="Schobel S."/>
            <person name="Town C.D."/>
        </authorList>
    </citation>
    <scope>GENOME REANNOTATION</scope>
    <source>
        <strain>cv. Columbia</strain>
    </source>
</reference>
<reference key="3">
    <citation type="journal article" date="2003" name="Science">
        <title>Empirical analysis of transcriptional activity in the Arabidopsis genome.</title>
        <authorList>
            <person name="Yamada K."/>
            <person name="Lim J."/>
            <person name="Dale J.M."/>
            <person name="Chen H."/>
            <person name="Shinn P."/>
            <person name="Palm C.J."/>
            <person name="Southwick A.M."/>
            <person name="Wu H.C."/>
            <person name="Kim C.J."/>
            <person name="Nguyen M."/>
            <person name="Pham P.K."/>
            <person name="Cheuk R.F."/>
            <person name="Karlin-Newmann G."/>
            <person name="Liu S.X."/>
            <person name="Lam B."/>
            <person name="Sakano H."/>
            <person name="Wu T."/>
            <person name="Yu G."/>
            <person name="Miranda M."/>
            <person name="Quach H.L."/>
            <person name="Tripp M."/>
            <person name="Chang C.H."/>
            <person name="Lee J.M."/>
            <person name="Toriumi M.J."/>
            <person name="Chan M.M."/>
            <person name="Tang C.C."/>
            <person name="Onodera C.S."/>
            <person name="Deng J.M."/>
            <person name="Akiyama K."/>
            <person name="Ansari Y."/>
            <person name="Arakawa T."/>
            <person name="Banh J."/>
            <person name="Banno F."/>
            <person name="Bowser L."/>
            <person name="Brooks S.Y."/>
            <person name="Carninci P."/>
            <person name="Chao Q."/>
            <person name="Choy N."/>
            <person name="Enju A."/>
            <person name="Goldsmith A.D."/>
            <person name="Gurjal M."/>
            <person name="Hansen N.F."/>
            <person name="Hayashizaki Y."/>
            <person name="Johnson-Hopson C."/>
            <person name="Hsuan V.W."/>
            <person name="Iida K."/>
            <person name="Karnes M."/>
            <person name="Khan S."/>
            <person name="Koesema E."/>
            <person name="Ishida J."/>
            <person name="Jiang P.X."/>
            <person name="Jones T."/>
            <person name="Kawai J."/>
            <person name="Kamiya A."/>
            <person name="Meyers C."/>
            <person name="Nakajima M."/>
            <person name="Narusaka M."/>
            <person name="Seki M."/>
            <person name="Sakurai T."/>
            <person name="Satou M."/>
            <person name="Tamse R."/>
            <person name="Vaysberg M."/>
            <person name="Wallender E.K."/>
            <person name="Wong C."/>
            <person name="Yamamura Y."/>
            <person name="Yuan S."/>
            <person name="Shinozaki K."/>
            <person name="Davis R.W."/>
            <person name="Theologis A."/>
            <person name="Ecker J.R."/>
        </authorList>
    </citation>
    <scope>NUCLEOTIDE SEQUENCE [LARGE SCALE MRNA]</scope>
    <source>
        <strain>cv. Columbia</strain>
    </source>
</reference>
<reference key="4">
    <citation type="journal article" date="2006" name="Plant Physiol.">
        <title>Genome-wide analysis of the ERF gene family in Arabidopsis and rice.</title>
        <authorList>
            <person name="Nakano T."/>
            <person name="Suzuki K."/>
            <person name="Fujimura T."/>
            <person name="Shinshi H."/>
        </authorList>
    </citation>
    <scope>GENE FAMILY</scope>
    <scope>NOMENCLATURE</scope>
</reference>
<reference key="5">
    <citation type="journal article" date="2008" name="Plant Physiol.">
        <title>Drought induction of Arabidopsis 9-cis-epoxycarotenoid dioxygenase occurs in vascular parenchyma cells.</title>
        <authorList>
            <person name="Endo A."/>
            <person name="Sawada Y."/>
            <person name="Takahashi H."/>
            <person name="Okamoto M."/>
            <person name="Ikegami K."/>
            <person name="Koiwai H."/>
            <person name="Seo M."/>
            <person name="Toyomasu T."/>
            <person name="Mitsuhashi W."/>
            <person name="Shinozaki K."/>
            <person name="Nakazono M."/>
            <person name="Kamiya Y."/>
            <person name="Koshiba T."/>
            <person name="Nambara E."/>
        </authorList>
    </citation>
    <scope>INDUCTION BY DROUGHT</scope>
</reference>
<reference key="6">
    <citation type="journal article" date="2012" name="Plant Physiol.">
        <title>Arabidopsis RGLG2, functioning as a RING E3 ligase, interacts with AtERF53 and negatively regulates the plant drought stress response.</title>
        <authorList>
            <person name="Cheng M.C."/>
            <person name="Hsieh E.J."/>
            <person name="Chen J.H."/>
            <person name="Chen H.Y."/>
            <person name="Lin T.P."/>
        </authorList>
    </citation>
    <scope>FUNCTION</scope>
    <scope>INTERACTION WITH RGLG1 AND RGLG2</scope>
    <scope>SUBCELLULAR LOCATION</scope>
    <scope>INDUCTION</scope>
    <scope>UBIQUITINATION</scope>
</reference>
<reference key="7">
    <citation type="journal article" date="2013" name="Plant Mol. Biol.">
        <title>Functional characterization of an abiotic stress-inducible transcription factor AtERF53 in Arabidopsis thaliana.</title>
        <authorList>
            <person name="Hsieh E.J."/>
            <person name="Cheng M.C."/>
            <person name="Lin T.P."/>
        </authorList>
    </citation>
    <scope>FUNCTION</scope>
    <scope>INDUCTION</scope>
</reference>
<comment type="function">
    <text evidence="4 5">Transcriptional activator involved in abiotic stress tolerance. Can directly regulate stress-related gene expression by binding to the DNA sequence 5'-[AG]CCGAC-3' (DRE element) of their promoter region. Involved in the regulation of stomatal closure movement under drought stress (PubMed:23625358). Acts as a positive regulator of drought stress response (PubMed:22095047).</text>
</comment>
<comment type="subunit">
    <text evidence="4">Interacts with RGLG1 and RGLG2.</text>
</comment>
<comment type="interaction">
    <interactant intactId="EBI-25511859">
        <id>Q9SKT1</id>
    </interactant>
    <interactant intactId="EBI-4446727">
        <id>Q94ID6</id>
        <label>ERF12</label>
    </interactant>
    <organismsDiffer>false</organismsDiffer>
    <experiments>3</experiments>
</comment>
<comment type="interaction">
    <interactant intactId="EBI-25511859">
        <id>Q9SKT1</id>
    </interactant>
    <interactant intactId="EBI-2000137">
        <id>Q9MAI5</id>
        <label>ERF8</label>
    </interactant>
    <organismsDiffer>false</organismsDiffer>
    <experiments>3</experiments>
</comment>
<comment type="interaction">
    <interactant intactId="EBI-25511859">
        <id>Q9SKT1</id>
    </interactant>
    <interactant intactId="EBI-4431933">
        <id>Q9FE67</id>
        <label>ERF9</label>
    </interactant>
    <organismsDiffer>false</organismsDiffer>
    <experiments>3</experiments>
</comment>
<comment type="interaction">
    <interactant intactId="EBI-25511859">
        <id>Q9SKT1</id>
    </interactant>
    <interactant intactId="EBI-3946459">
        <id>Q9C5X0</id>
        <label>IAA34</label>
    </interactant>
    <organismsDiffer>false</organismsDiffer>
    <experiments>6</experiments>
</comment>
<comment type="subcellular location">
    <subcellularLocation>
        <location evidence="4">Nucleus</location>
    </subcellularLocation>
</comment>
<comment type="induction">
    <text evidence="3 4 5">Induced by drought stress (PubMed:18550687, PubMed:22095047, PubMed:23625358). Induced by salt stress (PubMed:22095047). Induced by abscisic acid (ABA) and heat stress (PubMed:23625358).</text>
</comment>
<comment type="PTM">
    <text evidence="4">Ubiquitinated by RGLG2. Ubiquitination of ERF053 leads to its degradation by the proteasome.</text>
</comment>
<comment type="similarity">
    <text evidence="8">Belongs to the AP2/ERF transcription factor family. ERF subfamily.</text>
</comment>
<keyword id="KW-0010">Activator</keyword>
<keyword id="KW-0238">DNA-binding</keyword>
<keyword id="KW-0936">Ethylene signaling pathway</keyword>
<keyword id="KW-0539">Nucleus</keyword>
<keyword id="KW-1185">Reference proteome</keyword>
<keyword id="KW-0346">Stress response</keyword>
<keyword id="KW-0804">Transcription</keyword>
<keyword id="KW-0805">Transcription regulation</keyword>
<keyword id="KW-0832">Ubl conjugation</keyword>
<accession>Q9SKT1</accession>
<evidence type="ECO:0000255" key="1">
    <source>
        <dbReference type="PROSITE-ProRule" id="PRU00366"/>
    </source>
</evidence>
<evidence type="ECO:0000256" key="2">
    <source>
        <dbReference type="SAM" id="MobiDB-lite"/>
    </source>
</evidence>
<evidence type="ECO:0000269" key="3">
    <source>
    </source>
</evidence>
<evidence type="ECO:0000269" key="4">
    <source>
    </source>
</evidence>
<evidence type="ECO:0000269" key="5">
    <source>
    </source>
</evidence>
<evidence type="ECO:0000303" key="6">
    <source>
    </source>
</evidence>
<evidence type="ECO:0000303" key="7">
    <source>
    </source>
</evidence>
<evidence type="ECO:0000305" key="8"/>
<evidence type="ECO:0000312" key="9">
    <source>
        <dbReference type="Araport" id="AT2G20880"/>
    </source>
</evidence>
<evidence type="ECO:0000312" key="10">
    <source>
        <dbReference type="EMBL" id="AAD20907.1"/>
    </source>
</evidence>
<dbReference type="EMBL" id="AC006234">
    <property type="protein sequence ID" value="AAD20907.1"/>
    <property type="molecule type" value="Genomic_DNA"/>
</dbReference>
<dbReference type="EMBL" id="CP002685">
    <property type="protein sequence ID" value="AEC07091.1"/>
    <property type="molecule type" value="Genomic_DNA"/>
</dbReference>
<dbReference type="EMBL" id="AY062843">
    <property type="protein sequence ID" value="AAL32921.1"/>
    <property type="molecule type" value="mRNA"/>
</dbReference>
<dbReference type="EMBL" id="AY081659">
    <property type="protein sequence ID" value="AAM10221.1"/>
    <property type="molecule type" value="mRNA"/>
</dbReference>
<dbReference type="PIR" id="E84594">
    <property type="entry name" value="E84594"/>
</dbReference>
<dbReference type="RefSeq" id="NP_179685.1">
    <property type="nucleotide sequence ID" value="NM_127658.4"/>
</dbReference>
<dbReference type="SMR" id="Q9SKT1"/>
<dbReference type="BioGRID" id="1975">
    <property type="interactions" value="7"/>
</dbReference>
<dbReference type="FunCoup" id="Q9SKT1">
    <property type="interactions" value="51"/>
</dbReference>
<dbReference type="IntAct" id="Q9SKT1">
    <property type="interactions" value="5"/>
</dbReference>
<dbReference type="STRING" id="3702.Q9SKT1"/>
<dbReference type="iPTMnet" id="Q9SKT1"/>
<dbReference type="PaxDb" id="3702-AT2G20880.1"/>
<dbReference type="ProteomicsDB" id="220560"/>
<dbReference type="EnsemblPlants" id="AT2G20880.1">
    <property type="protein sequence ID" value="AT2G20880.1"/>
    <property type="gene ID" value="AT2G20880"/>
</dbReference>
<dbReference type="GeneID" id="816622"/>
<dbReference type="Gramene" id="AT2G20880.1">
    <property type="protein sequence ID" value="AT2G20880.1"/>
    <property type="gene ID" value="AT2G20880"/>
</dbReference>
<dbReference type="KEGG" id="ath:AT2G20880"/>
<dbReference type="Araport" id="AT2G20880"/>
<dbReference type="TAIR" id="AT2G20880">
    <property type="gene designation" value="ERF53"/>
</dbReference>
<dbReference type="eggNOG" id="ENOG502QU46">
    <property type="taxonomic scope" value="Eukaryota"/>
</dbReference>
<dbReference type="HOGENOM" id="CLU_047640_0_0_1"/>
<dbReference type="InParanoid" id="Q9SKT1"/>
<dbReference type="OMA" id="HQKQCET"/>
<dbReference type="PhylomeDB" id="Q9SKT1"/>
<dbReference type="PRO" id="PR:Q9SKT1"/>
<dbReference type="Proteomes" id="UP000006548">
    <property type="component" value="Chromosome 2"/>
</dbReference>
<dbReference type="ExpressionAtlas" id="Q9SKT1">
    <property type="expression patterns" value="baseline and differential"/>
</dbReference>
<dbReference type="GO" id="GO:0005737">
    <property type="term" value="C:cytoplasm"/>
    <property type="evidence" value="ECO:0007005"/>
    <property type="project" value="TAIR"/>
</dbReference>
<dbReference type="GO" id="GO:0005634">
    <property type="term" value="C:nucleus"/>
    <property type="evidence" value="ECO:0000314"/>
    <property type="project" value="TAIR"/>
</dbReference>
<dbReference type="GO" id="GO:0003700">
    <property type="term" value="F:DNA-binding transcription factor activity"/>
    <property type="evidence" value="ECO:0000250"/>
    <property type="project" value="TAIR"/>
</dbReference>
<dbReference type="GO" id="GO:0043565">
    <property type="term" value="F:sequence-specific DNA binding"/>
    <property type="evidence" value="ECO:0000314"/>
    <property type="project" value="UniProtKB"/>
</dbReference>
<dbReference type="GO" id="GO:0000976">
    <property type="term" value="F:transcription cis-regulatory region binding"/>
    <property type="evidence" value="ECO:0000353"/>
    <property type="project" value="TAIR"/>
</dbReference>
<dbReference type="GO" id="GO:0009873">
    <property type="term" value="P:ethylene-activated signaling pathway"/>
    <property type="evidence" value="ECO:0007669"/>
    <property type="project" value="UniProtKB-KW"/>
</dbReference>
<dbReference type="GO" id="GO:1900036">
    <property type="term" value="P:positive regulation of cellular response to heat"/>
    <property type="evidence" value="ECO:0000315"/>
    <property type="project" value="UniProtKB"/>
</dbReference>
<dbReference type="GO" id="GO:0045893">
    <property type="term" value="P:positive regulation of DNA-templated transcription"/>
    <property type="evidence" value="ECO:0000314"/>
    <property type="project" value="UniProtKB"/>
</dbReference>
<dbReference type="GO" id="GO:2000070">
    <property type="term" value="P:regulation of response to water deprivation"/>
    <property type="evidence" value="ECO:0000270"/>
    <property type="project" value="TAIR"/>
</dbReference>
<dbReference type="GO" id="GO:0009651">
    <property type="term" value="P:response to salt stress"/>
    <property type="evidence" value="ECO:0000270"/>
    <property type="project" value="TAIR"/>
</dbReference>
<dbReference type="CDD" id="cd00018">
    <property type="entry name" value="AP2"/>
    <property type="match status" value="1"/>
</dbReference>
<dbReference type="FunFam" id="3.30.730.10:FF:000001">
    <property type="entry name" value="Ethylene-responsive transcription factor 2"/>
    <property type="match status" value="1"/>
</dbReference>
<dbReference type="Gene3D" id="3.30.730.10">
    <property type="entry name" value="AP2/ERF domain"/>
    <property type="match status" value="1"/>
</dbReference>
<dbReference type="InterPro" id="IPR001471">
    <property type="entry name" value="AP2/ERF_dom"/>
</dbReference>
<dbReference type="InterPro" id="IPR036955">
    <property type="entry name" value="AP2/ERF_dom_sf"/>
</dbReference>
<dbReference type="InterPro" id="IPR016177">
    <property type="entry name" value="DNA-bd_dom_sf"/>
</dbReference>
<dbReference type="InterPro" id="IPR051758">
    <property type="entry name" value="ERF/AP2-like"/>
</dbReference>
<dbReference type="PANTHER" id="PTHR31657:SF19">
    <property type="entry name" value="ETHYLENE-RESPONSIVE TRANSCRIPTION FACTOR ERF053"/>
    <property type="match status" value="1"/>
</dbReference>
<dbReference type="PANTHER" id="PTHR31657">
    <property type="entry name" value="ETHYLENE-RESPONSIVE TRANSCRIPTION FACTOR ERF061"/>
    <property type="match status" value="1"/>
</dbReference>
<dbReference type="Pfam" id="PF00847">
    <property type="entry name" value="AP2"/>
    <property type="match status" value="1"/>
</dbReference>
<dbReference type="PRINTS" id="PR00367">
    <property type="entry name" value="ETHRSPELEMNT"/>
</dbReference>
<dbReference type="SMART" id="SM00380">
    <property type="entry name" value="AP2"/>
    <property type="match status" value="1"/>
</dbReference>
<dbReference type="SUPFAM" id="SSF54171">
    <property type="entry name" value="DNA-binding domain"/>
    <property type="match status" value="1"/>
</dbReference>
<dbReference type="PROSITE" id="PS51032">
    <property type="entry name" value="AP2_ERF"/>
    <property type="match status" value="1"/>
</dbReference>
<name>ERF53_ARATH</name>
<sequence length="336" mass="38398">MATAKNKGKSIRVLGTSEAEKKDEMELEEEFQFSSGKYKDSGPGSDMWLGDASSTSPRSLRKTRTFDRHNPYLVSSYATPQPPTTTTCSVSFPFYLPPAIQNQQRFLHPNDPSGQRQQQMISFDPQQQVQPYVAQQQQQQQHLLQYWRDILKLSPSGRMMMMNMLRQESDLPLTRPPVQPFSATKLYRGVRQRHWGKWVAEIRKPRNRTRLWLGTFDTAEEAAMAYDREAFKLRGETARLNFPELFLNKQEPTPVHQKQCETGTTSEDSSRRGEDDSSTALAVGGVSEETGWAEAWFNAIPEEWGPGSPLWDDYHFPISNHKDDLDATQNSSSDTI</sequence>
<organism>
    <name type="scientific">Arabidopsis thaliana</name>
    <name type="common">Mouse-ear cress</name>
    <dbReference type="NCBI Taxonomy" id="3702"/>
    <lineage>
        <taxon>Eukaryota</taxon>
        <taxon>Viridiplantae</taxon>
        <taxon>Streptophyta</taxon>
        <taxon>Embryophyta</taxon>
        <taxon>Tracheophyta</taxon>
        <taxon>Spermatophyta</taxon>
        <taxon>Magnoliopsida</taxon>
        <taxon>eudicotyledons</taxon>
        <taxon>Gunneridae</taxon>
        <taxon>Pentapetalae</taxon>
        <taxon>rosids</taxon>
        <taxon>malvids</taxon>
        <taxon>Brassicales</taxon>
        <taxon>Brassicaceae</taxon>
        <taxon>Camelineae</taxon>
        <taxon>Arabidopsis</taxon>
    </lineage>
</organism>
<feature type="chain" id="PRO_0000290393" description="Ethylene-responsive transcription factor ERF053">
    <location>
        <begin position="1"/>
        <end position="336"/>
    </location>
</feature>
<feature type="DNA-binding region" description="AP2/ERF" evidence="1">
    <location>
        <begin position="186"/>
        <end position="243"/>
    </location>
</feature>
<feature type="region of interest" description="Disordered" evidence="2">
    <location>
        <begin position="1"/>
        <end position="60"/>
    </location>
</feature>
<feature type="region of interest" description="Disordered" evidence="2">
    <location>
        <begin position="247"/>
        <end position="280"/>
    </location>
</feature>
<feature type="compositionally biased region" description="Basic residues" evidence="2">
    <location>
        <begin position="1"/>
        <end position="10"/>
    </location>
</feature>
<gene>
    <name evidence="6" type="primary">ERF053</name>
    <name evidence="9" type="ordered locus">At2g20880</name>
    <name evidence="10" type="ORF">F5H14.15</name>
</gene>
<proteinExistence type="evidence at protein level"/>
<protein>
    <recommendedName>
        <fullName evidence="8">Ethylene-responsive transcription factor ERF053</fullName>
        <shortName evidence="7">AtERF53</shortName>
    </recommendedName>
</protein>